<feature type="chain" id="PRO_1000095821" description="Tryptophan synthase beta chain">
    <location>
        <begin position="1"/>
        <end position="397"/>
    </location>
</feature>
<feature type="modified residue" description="N6-(pyridoxal phosphate)lysine" evidence="1">
    <location>
        <position position="87"/>
    </location>
</feature>
<protein>
    <recommendedName>
        <fullName evidence="1">Tryptophan synthase beta chain</fullName>
        <ecNumber evidence="1">4.2.1.20</ecNumber>
    </recommendedName>
</protein>
<dbReference type="EC" id="4.2.1.20" evidence="1"/>
<dbReference type="EMBL" id="FM200053">
    <property type="protein sequence ID" value="CAR59224.1"/>
    <property type="molecule type" value="Genomic_DNA"/>
</dbReference>
<dbReference type="RefSeq" id="WP_000209485.1">
    <property type="nucleotide sequence ID" value="NC_011147.1"/>
</dbReference>
<dbReference type="SMR" id="B5BIC1"/>
<dbReference type="KEGG" id="sek:SSPA1070"/>
<dbReference type="HOGENOM" id="CLU_016734_3_1_6"/>
<dbReference type="UniPathway" id="UPA00035">
    <property type="reaction ID" value="UER00044"/>
</dbReference>
<dbReference type="Proteomes" id="UP000001869">
    <property type="component" value="Chromosome"/>
</dbReference>
<dbReference type="GO" id="GO:0005737">
    <property type="term" value="C:cytoplasm"/>
    <property type="evidence" value="ECO:0007669"/>
    <property type="project" value="TreeGrafter"/>
</dbReference>
<dbReference type="GO" id="GO:0004834">
    <property type="term" value="F:tryptophan synthase activity"/>
    <property type="evidence" value="ECO:0007669"/>
    <property type="project" value="UniProtKB-UniRule"/>
</dbReference>
<dbReference type="CDD" id="cd06446">
    <property type="entry name" value="Trp-synth_B"/>
    <property type="match status" value="1"/>
</dbReference>
<dbReference type="FunFam" id="3.40.50.1100:FF:000001">
    <property type="entry name" value="Tryptophan synthase beta chain"/>
    <property type="match status" value="1"/>
</dbReference>
<dbReference type="FunFam" id="3.40.50.1100:FF:000004">
    <property type="entry name" value="Tryptophan synthase beta chain"/>
    <property type="match status" value="1"/>
</dbReference>
<dbReference type="Gene3D" id="3.40.50.1100">
    <property type="match status" value="2"/>
</dbReference>
<dbReference type="HAMAP" id="MF_00133">
    <property type="entry name" value="Trp_synth_beta"/>
    <property type="match status" value="1"/>
</dbReference>
<dbReference type="InterPro" id="IPR006653">
    <property type="entry name" value="Trp_synth_b_CS"/>
</dbReference>
<dbReference type="InterPro" id="IPR006654">
    <property type="entry name" value="Trp_synth_beta"/>
</dbReference>
<dbReference type="InterPro" id="IPR023026">
    <property type="entry name" value="Trp_synth_beta/beta-like"/>
</dbReference>
<dbReference type="InterPro" id="IPR001926">
    <property type="entry name" value="TrpB-like_PALP"/>
</dbReference>
<dbReference type="InterPro" id="IPR036052">
    <property type="entry name" value="TrpB-like_PALP_sf"/>
</dbReference>
<dbReference type="NCBIfam" id="TIGR00263">
    <property type="entry name" value="trpB"/>
    <property type="match status" value="1"/>
</dbReference>
<dbReference type="PANTHER" id="PTHR48077:SF3">
    <property type="entry name" value="TRYPTOPHAN SYNTHASE"/>
    <property type="match status" value="1"/>
</dbReference>
<dbReference type="PANTHER" id="PTHR48077">
    <property type="entry name" value="TRYPTOPHAN SYNTHASE-RELATED"/>
    <property type="match status" value="1"/>
</dbReference>
<dbReference type="Pfam" id="PF00291">
    <property type="entry name" value="PALP"/>
    <property type="match status" value="1"/>
</dbReference>
<dbReference type="PIRSF" id="PIRSF001413">
    <property type="entry name" value="Trp_syn_beta"/>
    <property type="match status" value="1"/>
</dbReference>
<dbReference type="SUPFAM" id="SSF53686">
    <property type="entry name" value="Tryptophan synthase beta subunit-like PLP-dependent enzymes"/>
    <property type="match status" value="1"/>
</dbReference>
<dbReference type="PROSITE" id="PS00168">
    <property type="entry name" value="TRP_SYNTHASE_BETA"/>
    <property type="match status" value="1"/>
</dbReference>
<accession>B5BIC1</accession>
<comment type="function">
    <text evidence="1">The beta subunit is responsible for the synthesis of L-tryptophan from indole and L-serine.</text>
</comment>
<comment type="catalytic activity">
    <reaction evidence="1">
        <text>(1S,2R)-1-C-(indol-3-yl)glycerol 3-phosphate + L-serine = D-glyceraldehyde 3-phosphate + L-tryptophan + H2O</text>
        <dbReference type="Rhea" id="RHEA:10532"/>
        <dbReference type="ChEBI" id="CHEBI:15377"/>
        <dbReference type="ChEBI" id="CHEBI:33384"/>
        <dbReference type="ChEBI" id="CHEBI:57912"/>
        <dbReference type="ChEBI" id="CHEBI:58866"/>
        <dbReference type="ChEBI" id="CHEBI:59776"/>
        <dbReference type="EC" id="4.2.1.20"/>
    </reaction>
</comment>
<comment type="cofactor">
    <cofactor evidence="1">
        <name>pyridoxal 5'-phosphate</name>
        <dbReference type="ChEBI" id="CHEBI:597326"/>
    </cofactor>
</comment>
<comment type="pathway">
    <text evidence="1">Amino-acid biosynthesis; L-tryptophan biosynthesis; L-tryptophan from chorismate: step 5/5.</text>
</comment>
<comment type="subunit">
    <text evidence="1">Tetramer of two alpha and two beta chains.</text>
</comment>
<comment type="similarity">
    <text evidence="1">Belongs to the TrpB family.</text>
</comment>
<proteinExistence type="inferred from homology"/>
<keyword id="KW-0028">Amino-acid biosynthesis</keyword>
<keyword id="KW-0057">Aromatic amino acid biosynthesis</keyword>
<keyword id="KW-0456">Lyase</keyword>
<keyword id="KW-0663">Pyridoxal phosphate</keyword>
<keyword id="KW-0822">Tryptophan biosynthesis</keyword>
<gene>
    <name evidence="1" type="primary">trpB</name>
    <name type="ordered locus">SSPA1070</name>
</gene>
<organism>
    <name type="scientific">Salmonella paratyphi A (strain AKU_12601)</name>
    <dbReference type="NCBI Taxonomy" id="554290"/>
    <lineage>
        <taxon>Bacteria</taxon>
        <taxon>Pseudomonadati</taxon>
        <taxon>Pseudomonadota</taxon>
        <taxon>Gammaproteobacteria</taxon>
        <taxon>Enterobacterales</taxon>
        <taxon>Enterobacteriaceae</taxon>
        <taxon>Salmonella</taxon>
    </lineage>
</organism>
<reference key="1">
    <citation type="journal article" date="2009" name="BMC Genomics">
        <title>Pseudogene accumulation in the evolutionary histories of Salmonella enterica serovars Paratyphi A and Typhi.</title>
        <authorList>
            <person name="Holt K.E."/>
            <person name="Thomson N.R."/>
            <person name="Wain J."/>
            <person name="Langridge G.C."/>
            <person name="Hasan R."/>
            <person name="Bhutta Z.A."/>
            <person name="Quail M.A."/>
            <person name="Norbertczak H."/>
            <person name="Walker D."/>
            <person name="Simmonds M."/>
            <person name="White B."/>
            <person name="Bason N."/>
            <person name="Mungall K."/>
            <person name="Dougan G."/>
            <person name="Parkhill J."/>
        </authorList>
    </citation>
    <scope>NUCLEOTIDE SEQUENCE [LARGE SCALE GENOMIC DNA]</scope>
    <source>
        <strain>AKU_12601</strain>
    </source>
</reference>
<name>TRPB_SALPK</name>
<sequence length="397" mass="42868">MTTLLNPYFGEFGGMYVPQILMPALNQLEEAFVSAQKDPEFQAQFADLLKNYAGRPTALTKCQNITAGTRTTLYLKREDLLHGGAHKTNQVLGQALLAKRMGKSEIIAETGAGQHGVASALASALLGLKCRIYMGAKDVERQSPNVFRMRLMGAEVIPVHSGSATLKDACNEALRDWSGSYETAHYMLGTAAGPHPYPTIVREFQRMIGEETKAQILDKEGRLPDAVIACVGGGSNAIGMFADFINDTSVGLIGVEPGGHGIETGEHGAPLKHGRVGIYFGMKAPMMQTADGQIEESYSISAGLDFPSVGPQHAYLNSIGRADYVSITDDEALEAFKTLCRHEGIIPALESSHALAHALKMMREQPEKEQLLVVNLSGRGDKDIFTVHDILKARGEI</sequence>
<evidence type="ECO:0000255" key="1">
    <source>
        <dbReference type="HAMAP-Rule" id="MF_00133"/>
    </source>
</evidence>